<feature type="chain" id="PRO_1000084589" description="tRNA pseudouridine synthase B">
    <location>
        <begin position="1"/>
        <end position="296"/>
    </location>
</feature>
<feature type="active site" description="Nucleophile" evidence="1">
    <location>
        <position position="38"/>
    </location>
</feature>
<sequence>MYGWINLDKPCGISSASAVNLVKKILNVKKVGHAGTLDPLASGVLPIAIGEATKVMPYAVDVVKSYLFTVQWGEQRTTDDIEGKIVAKSDIVPSSEDIKKAIPNFIGLLRQVPPNFSAVHVNGVRAFKLARNGQDVSLTSRDVNVLKLKLLSADQENNKADFYLLCKKGVYVRSIARDLGIELGCLGYVRKLQRVRVGCFRKKNAITLEMLKMLYNNSRKCSYLLPLWYVLQDMKHLNDVFSDIQIKKIKNGQNIELNNLYVVRNCGICYVSTGNVPVAICSIVNSVVRPVRIFNV</sequence>
<gene>
    <name evidence="1" type="primary">truB</name>
    <name type="ordered locus">ECH_0728</name>
</gene>
<proteinExistence type="inferred from homology"/>
<comment type="function">
    <text evidence="1">Responsible for synthesis of pseudouridine from uracil-55 in the psi GC loop of transfer RNAs.</text>
</comment>
<comment type="catalytic activity">
    <reaction evidence="1">
        <text>uridine(55) in tRNA = pseudouridine(55) in tRNA</text>
        <dbReference type="Rhea" id="RHEA:42532"/>
        <dbReference type="Rhea" id="RHEA-COMP:10101"/>
        <dbReference type="Rhea" id="RHEA-COMP:10102"/>
        <dbReference type="ChEBI" id="CHEBI:65314"/>
        <dbReference type="ChEBI" id="CHEBI:65315"/>
        <dbReference type="EC" id="5.4.99.25"/>
    </reaction>
</comment>
<comment type="similarity">
    <text evidence="1">Belongs to the pseudouridine synthase TruB family. Type 1 subfamily.</text>
</comment>
<dbReference type="EC" id="5.4.99.25" evidence="1"/>
<dbReference type="EMBL" id="CP000236">
    <property type="protein sequence ID" value="ABD45375.1"/>
    <property type="molecule type" value="Genomic_DNA"/>
</dbReference>
<dbReference type="RefSeq" id="WP_006010431.1">
    <property type="nucleotide sequence ID" value="NC_007799.1"/>
</dbReference>
<dbReference type="SMR" id="Q2GGA2"/>
<dbReference type="STRING" id="205920.ECH_0728"/>
<dbReference type="KEGG" id="ech:ECH_0728"/>
<dbReference type="eggNOG" id="COG0130">
    <property type="taxonomic scope" value="Bacteria"/>
</dbReference>
<dbReference type="HOGENOM" id="CLU_032087_0_3_5"/>
<dbReference type="OrthoDB" id="9802309at2"/>
<dbReference type="Proteomes" id="UP000008320">
    <property type="component" value="Chromosome"/>
</dbReference>
<dbReference type="GO" id="GO:0003723">
    <property type="term" value="F:RNA binding"/>
    <property type="evidence" value="ECO:0007669"/>
    <property type="project" value="InterPro"/>
</dbReference>
<dbReference type="GO" id="GO:0160148">
    <property type="term" value="F:tRNA pseudouridine(55) synthase activity"/>
    <property type="evidence" value="ECO:0007669"/>
    <property type="project" value="UniProtKB-EC"/>
</dbReference>
<dbReference type="GO" id="GO:1990481">
    <property type="term" value="P:mRNA pseudouridine synthesis"/>
    <property type="evidence" value="ECO:0007669"/>
    <property type="project" value="TreeGrafter"/>
</dbReference>
<dbReference type="GO" id="GO:0031119">
    <property type="term" value="P:tRNA pseudouridine synthesis"/>
    <property type="evidence" value="ECO:0007669"/>
    <property type="project" value="UniProtKB-UniRule"/>
</dbReference>
<dbReference type="CDD" id="cd02573">
    <property type="entry name" value="PseudoU_synth_EcTruB"/>
    <property type="match status" value="1"/>
</dbReference>
<dbReference type="Gene3D" id="3.30.2350.10">
    <property type="entry name" value="Pseudouridine synthase"/>
    <property type="match status" value="1"/>
</dbReference>
<dbReference type="HAMAP" id="MF_01080">
    <property type="entry name" value="TruB_bact"/>
    <property type="match status" value="1"/>
</dbReference>
<dbReference type="InterPro" id="IPR020103">
    <property type="entry name" value="PsdUridine_synth_cat_dom_sf"/>
</dbReference>
<dbReference type="InterPro" id="IPR002501">
    <property type="entry name" value="PsdUridine_synth_N"/>
</dbReference>
<dbReference type="InterPro" id="IPR014780">
    <property type="entry name" value="tRNA_psdUridine_synth_TruB"/>
</dbReference>
<dbReference type="InterPro" id="IPR032819">
    <property type="entry name" value="TruB_C"/>
</dbReference>
<dbReference type="NCBIfam" id="TIGR00431">
    <property type="entry name" value="TruB"/>
    <property type="match status" value="1"/>
</dbReference>
<dbReference type="PANTHER" id="PTHR13767:SF2">
    <property type="entry name" value="PSEUDOURIDYLATE SYNTHASE TRUB1"/>
    <property type="match status" value="1"/>
</dbReference>
<dbReference type="PANTHER" id="PTHR13767">
    <property type="entry name" value="TRNA-PSEUDOURIDINE SYNTHASE"/>
    <property type="match status" value="1"/>
</dbReference>
<dbReference type="Pfam" id="PF16198">
    <property type="entry name" value="TruB_C_2"/>
    <property type="match status" value="1"/>
</dbReference>
<dbReference type="Pfam" id="PF01509">
    <property type="entry name" value="TruB_N"/>
    <property type="match status" value="1"/>
</dbReference>
<dbReference type="SUPFAM" id="SSF55120">
    <property type="entry name" value="Pseudouridine synthase"/>
    <property type="match status" value="1"/>
</dbReference>
<keyword id="KW-0413">Isomerase</keyword>
<keyword id="KW-1185">Reference proteome</keyword>
<keyword id="KW-0819">tRNA processing</keyword>
<protein>
    <recommendedName>
        <fullName evidence="1">tRNA pseudouridine synthase B</fullName>
        <ecNumber evidence="1">5.4.99.25</ecNumber>
    </recommendedName>
    <alternativeName>
        <fullName evidence="1">tRNA pseudouridine(55) synthase</fullName>
        <shortName evidence="1">Psi55 synthase</shortName>
    </alternativeName>
    <alternativeName>
        <fullName evidence="1">tRNA pseudouridylate synthase</fullName>
    </alternativeName>
    <alternativeName>
        <fullName evidence="1">tRNA-uridine isomerase</fullName>
    </alternativeName>
</protein>
<name>TRUB_EHRCR</name>
<evidence type="ECO:0000255" key="1">
    <source>
        <dbReference type="HAMAP-Rule" id="MF_01080"/>
    </source>
</evidence>
<organism>
    <name type="scientific">Ehrlichia chaffeensis (strain ATCC CRL-10679 / Arkansas)</name>
    <dbReference type="NCBI Taxonomy" id="205920"/>
    <lineage>
        <taxon>Bacteria</taxon>
        <taxon>Pseudomonadati</taxon>
        <taxon>Pseudomonadota</taxon>
        <taxon>Alphaproteobacteria</taxon>
        <taxon>Rickettsiales</taxon>
        <taxon>Anaplasmataceae</taxon>
        <taxon>Ehrlichia</taxon>
    </lineage>
</organism>
<accession>Q2GGA2</accession>
<reference key="1">
    <citation type="journal article" date="2006" name="PLoS Genet.">
        <title>Comparative genomics of emerging human ehrlichiosis agents.</title>
        <authorList>
            <person name="Dunning Hotopp J.C."/>
            <person name="Lin M."/>
            <person name="Madupu R."/>
            <person name="Crabtree J."/>
            <person name="Angiuoli S.V."/>
            <person name="Eisen J.A."/>
            <person name="Seshadri R."/>
            <person name="Ren Q."/>
            <person name="Wu M."/>
            <person name="Utterback T.R."/>
            <person name="Smith S."/>
            <person name="Lewis M."/>
            <person name="Khouri H."/>
            <person name="Zhang C."/>
            <person name="Niu H."/>
            <person name="Lin Q."/>
            <person name="Ohashi N."/>
            <person name="Zhi N."/>
            <person name="Nelson W.C."/>
            <person name="Brinkac L.M."/>
            <person name="Dodson R.J."/>
            <person name="Rosovitz M.J."/>
            <person name="Sundaram J.P."/>
            <person name="Daugherty S.C."/>
            <person name="Davidsen T."/>
            <person name="Durkin A.S."/>
            <person name="Gwinn M.L."/>
            <person name="Haft D.H."/>
            <person name="Selengut J.D."/>
            <person name="Sullivan S.A."/>
            <person name="Zafar N."/>
            <person name="Zhou L."/>
            <person name="Benahmed F."/>
            <person name="Forberger H."/>
            <person name="Halpin R."/>
            <person name="Mulligan S."/>
            <person name="Robinson J."/>
            <person name="White O."/>
            <person name="Rikihisa Y."/>
            <person name="Tettelin H."/>
        </authorList>
    </citation>
    <scope>NUCLEOTIDE SEQUENCE [LARGE SCALE GENOMIC DNA]</scope>
    <source>
        <strain>ATCC CRL-10679 / Arkansas</strain>
    </source>
</reference>